<dbReference type="EC" id="5.6.1.7" evidence="2"/>
<dbReference type="EMBL" id="Z22604">
    <property type="protein sequence ID" value="CAA80318.1"/>
    <property type="molecule type" value="Genomic_DNA"/>
</dbReference>
<dbReference type="EMBL" id="BA000040">
    <property type="protein sequence ID" value="BAC52244.1"/>
    <property type="molecule type" value="Genomic_DNA"/>
</dbReference>
<dbReference type="PIR" id="S35309">
    <property type="entry name" value="S35309"/>
</dbReference>
<dbReference type="RefSeq" id="NP_773619.1">
    <property type="nucleotide sequence ID" value="NC_004463.1"/>
</dbReference>
<dbReference type="RefSeq" id="WP_011089717.1">
    <property type="nucleotide sequence ID" value="NC_004463.1"/>
</dbReference>
<dbReference type="SMR" id="P35861"/>
<dbReference type="FunCoup" id="P35861">
    <property type="interactions" value="1055"/>
</dbReference>
<dbReference type="STRING" id="224911.AAV28_32485"/>
<dbReference type="EnsemblBacteria" id="BAC52244">
    <property type="protein sequence ID" value="BAC52244"/>
    <property type="gene ID" value="BAC52244"/>
</dbReference>
<dbReference type="GeneID" id="46493943"/>
<dbReference type="KEGG" id="bja:blr6979"/>
<dbReference type="PATRIC" id="fig|224911.44.peg.7013"/>
<dbReference type="eggNOG" id="COG0459">
    <property type="taxonomic scope" value="Bacteria"/>
</dbReference>
<dbReference type="HOGENOM" id="CLU_016503_3_0_5"/>
<dbReference type="InParanoid" id="P35861"/>
<dbReference type="OrthoDB" id="9766614at2"/>
<dbReference type="PhylomeDB" id="P35861"/>
<dbReference type="Proteomes" id="UP000002526">
    <property type="component" value="Chromosome"/>
</dbReference>
<dbReference type="GO" id="GO:1990220">
    <property type="term" value="C:GroEL-GroES complex"/>
    <property type="evidence" value="ECO:0000318"/>
    <property type="project" value="GO_Central"/>
</dbReference>
<dbReference type="GO" id="GO:0005524">
    <property type="term" value="F:ATP binding"/>
    <property type="evidence" value="ECO:0000318"/>
    <property type="project" value="GO_Central"/>
</dbReference>
<dbReference type="GO" id="GO:0140662">
    <property type="term" value="F:ATP-dependent protein folding chaperone"/>
    <property type="evidence" value="ECO:0007669"/>
    <property type="project" value="InterPro"/>
</dbReference>
<dbReference type="GO" id="GO:0016853">
    <property type="term" value="F:isomerase activity"/>
    <property type="evidence" value="ECO:0007669"/>
    <property type="project" value="UniProtKB-KW"/>
</dbReference>
<dbReference type="GO" id="GO:0051082">
    <property type="term" value="F:unfolded protein binding"/>
    <property type="evidence" value="ECO:0000318"/>
    <property type="project" value="GO_Central"/>
</dbReference>
<dbReference type="GO" id="GO:0051085">
    <property type="term" value="P:chaperone cofactor-dependent protein refolding"/>
    <property type="evidence" value="ECO:0000318"/>
    <property type="project" value="GO_Central"/>
</dbReference>
<dbReference type="GO" id="GO:0042026">
    <property type="term" value="P:protein refolding"/>
    <property type="evidence" value="ECO:0007669"/>
    <property type="project" value="UniProtKB-UniRule"/>
</dbReference>
<dbReference type="GO" id="GO:0009408">
    <property type="term" value="P:response to heat"/>
    <property type="evidence" value="ECO:0000318"/>
    <property type="project" value="GO_Central"/>
</dbReference>
<dbReference type="CDD" id="cd03344">
    <property type="entry name" value="GroEL"/>
    <property type="match status" value="1"/>
</dbReference>
<dbReference type="FunFam" id="1.10.560.10:FF:000001">
    <property type="entry name" value="60 kDa chaperonin"/>
    <property type="match status" value="1"/>
</dbReference>
<dbReference type="FunFam" id="3.50.7.10:FF:000001">
    <property type="entry name" value="60 kDa chaperonin"/>
    <property type="match status" value="1"/>
</dbReference>
<dbReference type="Gene3D" id="3.50.7.10">
    <property type="entry name" value="GroEL"/>
    <property type="match status" value="1"/>
</dbReference>
<dbReference type="Gene3D" id="1.10.560.10">
    <property type="entry name" value="GroEL-like equatorial domain"/>
    <property type="match status" value="1"/>
</dbReference>
<dbReference type="Gene3D" id="3.30.260.10">
    <property type="entry name" value="TCP-1-like chaperonin intermediate domain"/>
    <property type="match status" value="1"/>
</dbReference>
<dbReference type="HAMAP" id="MF_00600">
    <property type="entry name" value="CH60"/>
    <property type="match status" value="1"/>
</dbReference>
<dbReference type="InterPro" id="IPR018370">
    <property type="entry name" value="Chaperonin_Cpn60_CS"/>
</dbReference>
<dbReference type="InterPro" id="IPR001844">
    <property type="entry name" value="Cpn60/GroEL"/>
</dbReference>
<dbReference type="InterPro" id="IPR002423">
    <property type="entry name" value="Cpn60/GroEL/TCP-1"/>
</dbReference>
<dbReference type="InterPro" id="IPR027409">
    <property type="entry name" value="GroEL-like_apical_dom_sf"/>
</dbReference>
<dbReference type="InterPro" id="IPR027413">
    <property type="entry name" value="GROEL-like_equatorial_sf"/>
</dbReference>
<dbReference type="InterPro" id="IPR027410">
    <property type="entry name" value="TCP-1-like_intermed_sf"/>
</dbReference>
<dbReference type="NCBIfam" id="TIGR02348">
    <property type="entry name" value="GroEL"/>
    <property type="match status" value="1"/>
</dbReference>
<dbReference type="NCBIfam" id="NF000592">
    <property type="entry name" value="PRK00013.1"/>
    <property type="match status" value="1"/>
</dbReference>
<dbReference type="NCBIfam" id="NF009487">
    <property type="entry name" value="PRK12849.1"/>
    <property type="match status" value="1"/>
</dbReference>
<dbReference type="NCBIfam" id="NF009488">
    <property type="entry name" value="PRK12850.1"/>
    <property type="match status" value="1"/>
</dbReference>
<dbReference type="NCBIfam" id="NF009489">
    <property type="entry name" value="PRK12851.1"/>
    <property type="match status" value="1"/>
</dbReference>
<dbReference type="NCBIfam" id="NF010704">
    <property type="entry name" value="PRK14104.1"/>
    <property type="match status" value="1"/>
</dbReference>
<dbReference type="PANTHER" id="PTHR45633">
    <property type="entry name" value="60 KDA HEAT SHOCK PROTEIN, MITOCHONDRIAL"/>
    <property type="match status" value="1"/>
</dbReference>
<dbReference type="Pfam" id="PF00118">
    <property type="entry name" value="Cpn60_TCP1"/>
    <property type="match status" value="1"/>
</dbReference>
<dbReference type="PRINTS" id="PR00298">
    <property type="entry name" value="CHAPERONIN60"/>
</dbReference>
<dbReference type="SUPFAM" id="SSF52029">
    <property type="entry name" value="GroEL apical domain-like"/>
    <property type="match status" value="1"/>
</dbReference>
<dbReference type="SUPFAM" id="SSF48592">
    <property type="entry name" value="GroEL equatorial domain-like"/>
    <property type="match status" value="1"/>
</dbReference>
<dbReference type="SUPFAM" id="SSF54849">
    <property type="entry name" value="GroEL-intermediate domain like"/>
    <property type="match status" value="1"/>
</dbReference>
<dbReference type="PROSITE" id="PS00296">
    <property type="entry name" value="CHAPERONINS_CPN60"/>
    <property type="match status" value="1"/>
</dbReference>
<accession>P35861</accession>
<feature type="initiator methionine" description="Removed" evidence="1">
    <location>
        <position position="1"/>
    </location>
</feature>
<feature type="chain" id="PRO_0000063295" description="Chaperonin GroEL 2">
    <location>
        <begin position="2"/>
        <end position="550"/>
    </location>
</feature>
<feature type="binding site" evidence="2">
    <location>
        <begin position="30"/>
        <end position="33"/>
    </location>
    <ligand>
        <name>ATP</name>
        <dbReference type="ChEBI" id="CHEBI:30616"/>
    </ligand>
</feature>
<feature type="binding site" evidence="2">
    <location>
        <position position="51"/>
    </location>
    <ligand>
        <name>ATP</name>
        <dbReference type="ChEBI" id="CHEBI:30616"/>
    </ligand>
</feature>
<feature type="binding site" evidence="2">
    <location>
        <begin position="87"/>
        <end position="91"/>
    </location>
    <ligand>
        <name>ATP</name>
        <dbReference type="ChEBI" id="CHEBI:30616"/>
    </ligand>
</feature>
<feature type="binding site" evidence="2">
    <location>
        <position position="415"/>
    </location>
    <ligand>
        <name>ATP</name>
        <dbReference type="ChEBI" id="CHEBI:30616"/>
    </ligand>
</feature>
<feature type="binding site" evidence="2">
    <location>
        <position position="496"/>
    </location>
    <ligand>
        <name>ATP</name>
        <dbReference type="ChEBI" id="CHEBI:30616"/>
    </ligand>
</feature>
<proteinExistence type="evidence at transcript level"/>
<organism>
    <name type="scientific">Bradyrhizobium diazoefficiens (strain JCM 10833 / BCRC 13528 / IAM 13628 / NBRC 14792 / USDA 110)</name>
    <dbReference type="NCBI Taxonomy" id="224911"/>
    <lineage>
        <taxon>Bacteria</taxon>
        <taxon>Pseudomonadati</taxon>
        <taxon>Pseudomonadota</taxon>
        <taxon>Alphaproteobacteria</taxon>
        <taxon>Hyphomicrobiales</taxon>
        <taxon>Nitrobacteraceae</taxon>
        <taxon>Bradyrhizobium</taxon>
    </lineage>
</organism>
<protein>
    <recommendedName>
        <fullName evidence="2">Chaperonin GroEL 2</fullName>
        <ecNumber evidence="2">5.6.1.7</ecNumber>
    </recommendedName>
    <alternativeName>
        <fullName evidence="2">60 kDa chaperonin 2</fullName>
    </alternativeName>
    <alternativeName>
        <fullName evidence="2">Chaperonin-60 2</fullName>
        <shortName evidence="2">Cpn60 2</shortName>
    </alternativeName>
</protein>
<name>CH602_BRADU</name>
<evidence type="ECO:0000250" key="1"/>
<evidence type="ECO:0000255" key="2">
    <source>
        <dbReference type="HAMAP-Rule" id="MF_00600"/>
    </source>
</evidence>
<reference key="1">
    <citation type="journal article" date="1993" name="EMBO J.">
        <title>One member of a gro-ESL-like chaperonin multigene family in Bradyrhizobium japonicum is co-regulated with symbiotic nitrogen fixation genes.</title>
        <authorList>
            <person name="Fischer H.-M."/>
            <person name="Babst M."/>
            <person name="Kaspar T."/>
            <person name="Acuna G."/>
            <person name="Arigoni F."/>
            <person name="Hennecke H."/>
        </authorList>
    </citation>
    <scope>NUCLEOTIDE SEQUENCE [GENOMIC DNA]</scope>
    <source>
        <strain>USDA 110spc4</strain>
    </source>
</reference>
<reference key="2">
    <citation type="journal article" date="2002" name="DNA Res.">
        <title>Complete genomic sequence of nitrogen-fixing symbiotic bacterium Bradyrhizobium japonicum USDA110.</title>
        <authorList>
            <person name="Kaneko T."/>
            <person name="Nakamura Y."/>
            <person name="Sato S."/>
            <person name="Minamisawa K."/>
            <person name="Uchiumi T."/>
            <person name="Sasamoto S."/>
            <person name="Watanabe A."/>
            <person name="Idesawa K."/>
            <person name="Iriguchi M."/>
            <person name="Kawashima K."/>
            <person name="Kohara M."/>
            <person name="Matsumoto M."/>
            <person name="Shimpo S."/>
            <person name="Tsuruoka H."/>
            <person name="Wada T."/>
            <person name="Yamada M."/>
            <person name="Tabata S."/>
        </authorList>
    </citation>
    <scope>NUCLEOTIDE SEQUENCE [LARGE SCALE GENOMIC DNA]</scope>
    <source>
        <strain>JCM 10833 / BCRC 13528 / IAM 13628 / NBRC 14792 / USDA 110</strain>
    </source>
</reference>
<gene>
    <name evidence="2" type="primary">groEL2</name>
    <name evidence="2" type="synonym">groL2</name>
    <name type="ordered locus">blr6979</name>
</gene>
<keyword id="KW-0067">ATP-binding</keyword>
<keyword id="KW-0143">Chaperone</keyword>
<keyword id="KW-0963">Cytoplasm</keyword>
<keyword id="KW-0413">Isomerase</keyword>
<keyword id="KW-0547">Nucleotide-binding</keyword>
<keyword id="KW-1185">Reference proteome</keyword>
<comment type="function">
    <text evidence="2">Together with its co-chaperonin GroES, plays an essential role in assisting protein folding. The GroEL-GroES system forms a nano-cage that allows encapsulation of the non-native substrate proteins and provides a physical environment optimized to promote and accelerate protein folding.</text>
</comment>
<comment type="catalytic activity">
    <reaction evidence="2">
        <text>ATP + H2O + a folded polypeptide = ADP + phosphate + an unfolded polypeptide.</text>
        <dbReference type="EC" id="5.6.1.7"/>
    </reaction>
</comment>
<comment type="subunit">
    <text evidence="2">Forms a cylinder of 14 subunits composed of two heptameric rings stacked back-to-back. Interacts with the co-chaperonin GroES.</text>
</comment>
<comment type="subcellular location">
    <subcellularLocation>
        <location evidence="2">Cytoplasm</location>
    </subcellularLocation>
</comment>
<comment type="induction">
    <text>Not induced by heat shock.</text>
</comment>
<comment type="similarity">
    <text evidence="2">Belongs to the chaperonin (HSP60) family.</text>
</comment>
<sequence>MSAKEVKFGVDARDRMLRGVDILHNAVKVTLGPKGRNVVLDKSFGAPRITKDGVTVAKEIELEDKFENMGAQMVREVASKSADAAGDGTTTATVLAAAIVREGAKSVAAGMNPMDLKRGIDMAVEAVVADLVKNSKKVTSNEEIAQVGTISANGDAEIGKFISDAMKKVGNEGVITVEEAKSLETELEVVEGMQFDRGYISPYFVTNADKMRVEMDDAYVLINEKKLSQLNELLPLLEAVVQSGKPLVIIAEDVEGEALATLVVNRLRGGLKVAAVKAPGFGDRRKAMLQDIAILTGGQAISEDLGIKLENVTLNMLGRAKKVMIDKENTTIVSGAGKKADIEARVAQIKAQIEETTSDYDREKLQERLAKLAGGVAVIRVGGATEVEVKERKDRVDDAMHATRAAVEEGILPGGGVALLRASEHLKGIRTKNDDQKTGVEIVRKALSYPARQIAINAGEDGSVIVGKILEKDQYSYGYDSQTGEYGNLVSKGIIDPTKVVRVAIQNAASVAALLITTEAMVAEVPKKNTGAGGMPPGGGGMGGMGGMDF</sequence>